<accession>O00193</accession>
<accession>B2RD28</accession>
<evidence type="ECO:0000256" key="1">
    <source>
        <dbReference type="SAM" id="MobiDB-lite"/>
    </source>
</evidence>
<evidence type="ECO:0000305" key="2"/>
<evidence type="ECO:0007744" key="3">
    <source>
    </source>
</evidence>
<evidence type="ECO:0007744" key="4">
    <source>
    </source>
</evidence>
<evidence type="ECO:0007744" key="5">
    <source>
    </source>
</evidence>
<evidence type="ECO:0007744" key="6">
    <source>
    </source>
</evidence>
<evidence type="ECO:0007744" key="7">
    <source>
    </source>
</evidence>
<evidence type="ECO:0007744" key="8">
    <source>
    </source>
</evidence>
<evidence type="ECO:0007744" key="9">
    <source>
    </source>
</evidence>
<evidence type="ECO:0007744" key="10">
    <source>
    </source>
</evidence>
<evidence type="ECO:0007744" key="11">
    <source>
    </source>
</evidence>
<evidence type="ECO:0007744" key="12">
    <source>
    </source>
</evidence>
<comment type="similarity">
    <text evidence="2">Belongs to the SMAP family.</text>
</comment>
<gene>
    <name type="primary">SMAP</name>
    <name type="synonym">C11orf58</name>
</gene>
<organism>
    <name type="scientific">Homo sapiens</name>
    <name type="common">Human</name>
    <dbReference type="NCBI Taxonomy" id="9606"/>
    <lineage>
        <taxon>Eukaryota</taxon>
        <taxon>Metazoa</taxon>
        <taxon>Chordata</taxon>
        <taxon>Craniata</taxon>
        <taxon>Vertebrata</taxon>
        <taxon>Euteleostomi</taxon>
        <taxon>Mammalia</taxon>
        <taxon>Eutheria</taxon>
        <taxon>Euarchontoglires</taxon>
        <taxon>Primates</taxon>
        <taxon>Haplorrhini</taxon>
        <taxon>Catarrhini</taxon>
        <taxon>Hominidae</taxon>
        <taxon>Homo</taxon>
    </lineage>
</organism>
<protein>
    <recommendedName>
        <fullName>Small acidic protein</fullName>
    </recommendedName>
</protein>
<dbReference type="EMBL" id="U51678">
    <property type="protein sequence ID" value="AAB99729.1"/>
    <property type="molecule type" value="mRNA"/>
</dbReference>
<dbReference type="EMBL" id="CR456882">
    <property type="protein sequence ID" value="CAG33163.1"/>
    <property type="molecule type" value="mRNA"/>
</dbReference>
<dbReference type="EMBL" id="AK315382">
    <property type="protein sequence ID" value="BAG37775.1"/>
    <property type="molecule type" value="mRNA"/>
</dbReference>
<dbReference type="EMBL" id="CH471064">
    <property type="protein sequence ID" value="EAW68455.1"/>
    <property type="molecule type" value="Genomic_DNA"/>
</dbReference>
<dbReference type="EMBL" id="BC007103">
    <property type="protein sequence ID" value="AAH07103.1"/>
    <property type="molecule type" value="mRNA"/>
</dbReference>
<dbReference type="EMBL" id="BC016352">
    <property type="protein sequence ID" value="AAH16352.1"/>
    <property type="molecule type" value="mRNA"/>
</dbReference>
<dbReference type="EMBL" id="BC020937">
    <property type="protein sequence ID" value="AAH20937.1"/>
    <property type="molecule type" value="mRNA"/>
</dbReference>
<dbReference type="EMBL" id="BC103747">
    <property type="protein sequence ID" value="AAI03748.1"/>
    <property type="molecule type" value="mRNA"/>
</dbReference>
<dbReference type="CCDS" id="CCDS7822.1"/>
<dbReference type="RefSeq" id="NP_055082.1">
    <property type="nucleotide sequence ID" value="NM_014267.5"/>
</dbReference>
<dbReference type="BioGRID" id="116144">
    <property type="interactions" value="95"/>
</dbReference>
<dbReference type="FunCoup" id="O00193">
    <property type="interactions" value="831"/>
</dbReference>
<dbReference type="IntAct" id="O00193">
    <property type="interactions" value="29"/>
</dbReference>
<dbReference type="MINT" id="O00193"/>
<dbReference type="STRING" id="9606.ENSP00000228136"/>
<dbReference type="GlyGen" id="O00193">
    <property type="glycosylation" value="1 site, 1 O-linked glycan (1 site)"/>
</dbReference>
<dbReference type="iPTMnet" id="O00193"/>
<dbReference type="MetOSite" id="O00193"/>
<dbReference type="PhosphoSitePlus" id="O00193"/>
<dbReference type="SwissPalm" id="O00193"/>
<dbReference type="BioMuta" id="C11orf58"/>
<dbReference type="jPOST" id="O00193"/>
<dbReference type="MassIVE" id="O00193"/>
<dbReference type="PaxDb" id="9606-ENSP00000228136"/>
<dbReference type="PeptideAtlas" id="O00193"/>
<dbReference type="Pumba" id="O00193"/>
<dbReference type="TopDownProteomics" id="O00193"/>
<dbReference type="Antibodypedia" id="49041">
    <property type="antibodies" value="31 antibodies from 9 providers"/>
</dbReference>
<dbReference type="DNASU" id="10944"/>
<dbReference type="Ensembl" id="ENST00000228136.9">
    <property type="protein sequence ID" value="ENSP00000228136.4"/>
    <property type="gene ID" value="ENSG00000110696.10"/>
</dbReference>
<dbReference type="GeneID" id="10944"/>
<dbReference type="KEGG" id="hsa:10944"/>
<dbReference type="MANE-Select" id="ENST00000228136.9">
    <property type="protein sequence ID" value="ENSP00000228136.4"/>
    <property type="RefSeq nucleotide sequence ID" value="NM_014267.6"/>
    <property type="RefSeq protein sequence ID" value="NP_055082.1"/>
</dbReference>
<dbReference type="UCSC" id="uc001mmk.3">
    <property type="organism name" value="human"/>
</dbReference>
<dbReference type="AGR" id="HGNC:16990"/>
<dbReference type="CTD" id="10944"/>
<dbReference type="DisGeNET" id="10944"/>
<dbReference type="GeneCards" id="C11orf58"/>
<dbReference type="HGNC" id="HGNC:16990">
    <property type="gene designation" value="C11orf58"/>
</dbReference>
<dbReference type="HPA" id="ENSG00000110696">
    <property type="expression patterns" value="Low tissue specificity"/>
</dbReference>
<dbReference type="MIM" id="619625">
    <property type="type" value="gene"/>
</dbReference>
<dbReference type="neXtProt" id="NX_O00193"/>
<dbReference type="OpenTargets" id="ENSG00000110696"/>
<dbReference type="PharmGKB" id="PA143485353"/>
<dbReference type="VEuPathDB" id="HostDB:ENSG00000110696"/>
<dbReference type="eggNOG" id="ENOG502RXI1">
    <property type="taxonomic scope" value="Eukaryota"/>
</dbReference>
<dbReference type="GeneTree" id="ENSGT00390000000687"/>
<dbReference type="HOGENOM" id="CLU_121598_0_0_1"/>
<dbReference type="InParanoid" id="O00193"/>
<dbReference type="OMA" id="DIGSSNW"/>
<dbReference type="OrthoDB" id="10066125at2759"/>
<dbReference type="PAN-GO" id="O00193">
    <property type="GO annotations" value="0 GO annotations based on evolutionary models"/>
</dbReference>
<dbReference type="PhylomeDB" id="O00193"/>
<dbReference type="TreeFam" id="TF328803"/>
<dbReference type="PathwayCommons" id="O00193"/>
<dbReference type="SignaLink" id="O00193"/>
<dbReference type="BioGRID-ORCS" id="10944">
    <property type="hits" value="43 hits in 1092 CRISPR screens"/>
</dbReference>
<dbReference type="ChiTaRS" id="C11orf58">
    <property type="organism name" value="human"/>
</dbReference>
<dbReference type="GeneWiki" id="C11orf58"/>
<dbReference type="GenomeRNAi" id="10944"/>
<dbReference type="Pharos" id="O00193">
    <property type="development level" value="Tdark"/>
</dbReference>
<dbReference type="PRO" id="PR:O00193"/>
<dbReference type="Proteomes" id="UP000005640">
    <property type="component" value="Chromosome 11"/>
</dbReference>
<dbReference type="RNAct" id="O00193">
    <property type="molecule type" value="protein"/>
</dbReference>
<dbReference type="Bgee" id="ENSG00000110696">
    <property type="expression patterns" value="Expressed in calcaneal tendon and 184 other cell types or tissues"/>
</dbReference>
<dbReference type="ExpressionAtlas" id="O00193">
    <property type="expression patterns" value="baseline and differential"/>
</dbReference>
<dbReference type="InterPro" id="IPR026714">
    <property type="entry name" value="SMAP"/>
</dbReference>
<dbReference type="InterPro" id="IPR028124">
    <property type="entry name" value="SMAP_dom"/>
</dbReference>
<dbReference type="PANTHER" id="PTHR22175:SF0">
    <property type="entry name" value="SMALL ACIDIC PROTEIN"/>
    <property type="match status" value="1"/>
</dbReference>
<dbReference type="PANTHER" id="PTHR22175">
    <property type="entry name" value="SMALL ACIDIC PROTEIN-RELATED"/>
    <property type="match status" value="1"/>
</dbReference>
<dbReference type="Pfam" id="PF15477">
    <property type="entry name" value="SMAP"/>
    <property type="match status" value="1"/>
</dbReference>
<sequence length="183" mass="20333">MSAARESHPHGVKRSASPDDDLGSSNWEAADLGNEERKQKFLRLMGAGKKEHTGRLVIGDHKSTSHFRTGEEDKKINEELESQYQQSMDSKLSGRYRRHCGLGFSEVEDHDGEGDVAGDDDDDDDDSPDPESPDDSESDSESEKEESAEELQAAEHPDEVEDPKNKKDAKSNYKMMFVKSSGS</sequence>
<name>SMAP_HUMAN</name>
<feature type="chain" id="PRO_0000263656" description="Small acidic protein">
    <location>
        <begin position="1"/>
        <end position="183"/>
    </location>
</feature>
<feature type="region of interest" description="Disordered" evidence="1">
    <location>
        <begin position="1"/>
        <end position="183"/>
    </location>
</feature>
<feature type="compositionally biased region" description="Basic and acidic residues" evidence="1">
    <location>
        <begin position="48"/>
        <end position="78"/>
    </location>
</feature>
<feature type="compositionally biased region" description="Acidic residues" evidence="1">
    <location>
        <begin position="106"/>
        <end position="149"/>
    </location>
</feature>
<feature type="compositionally biased region" description="Basic and acidic residues" evidence="1">
    <location>
        <begin position="153"/>
        <end position="171"/>
    </location>
</feature>
<feature type="modified residue" description="Phosphoserine" evidence="5 8 9">
    <location>
        <position position="15"/>
    </location>
</feature>
<feature type="modified residue" description="Phosphoserine" evidence="4 5 8 9 10 11">
    <location>
        <position position="17"/>
    </location>
</feature>
<feature type="modified residue" description="Phosphoserine" evidence="11">
    <location>
        <position position="63"/>
    </location>
</feature>
<feature type="modified residue" description="Phosphoserine" evidence="11">
    <location>
        <position position="87"/>
    </location>
</feature>
<feature type="modified residue" description="Phosphoserine" evidence="9 10">
    <location>
        <position position="127"/>
    </location>
</feature>
<feature type="modified residue" description="Phosphoserine" evidence="3 6 10">
    <location>
        <position position="147"/>
    </location>
</feature>
<feature type="modified residue" description="N6-acetyllysine" evidence="7">
    <location>
        <position position="174"/>
    </location>
</feature>
<feature type="modified residue" description="N6-acetyllysine" evidence="7">
    <location>
        <position position="179"/>
    </location>
</feature>
<feature type="cross-link" description="Glycyl lysine isopeptide (Lys-Gly) (interchain with G-Cter in SUMO2)" evidence="12">
    <location>
        <position position="13"/>
    </location>
</feature>
<feature type="cross-link" description="Glycyl lysine isopeptide (Lys-Gly) (interchain with G-Cter in SUMO2)" evidence="12">
    <location>
        <position position="62"/>
    </location>
</feature>
<feature type="cross-link" description="Glycyl lysine isopeptide (Lys-Gly) (interchain with G-Cter in SUMO2)" evidence="12">
    <location>
        <position position="75"/>
    </location>
</feature>
<keyword id="KW-0007">Acetylation</keyword>
<keyword id="KW-1017">Isopeptide bond</keyword>
<keyword id="KW-0597">Phosphoprotein</keyword>
<keyword id="KW-1267">Proteomics identification</keyword>
<keyword id="KW-1185">Reference proteome</keyword>
<keyword id="KW-0832">Ubl conjugation</keyword>
<proteinExistence type="evidence at protein level"/>
<reference key="1">
    <citation type="journal article" date="1997" name="Int. J. Dev. Neurosci.">
        <title>Novel genes expressed in the chick otocyst during development: identification using differential display of RNA.</title>
        <authorList>
            <person name="Gong T.-W."/>
            <person name="Hegeman A.D."/>
            <person name="Shin J.J."/>
            <person name="Lindberg K.H."/>
            <person name="Barald K.F."/>
            <person name="Lomax M.I."/>
        </authorList>
    </citation>
    <scope>NUCLEOTIDE SEQUENCE [MRNA]</scope>
    <source>
        <tissue>Placenta</tissue>
    </source>
</reference>
<reference key="2">
    <citation type="submission" date="2004-06" db="EMBL/GenBank/DDBJ databases">
        <title>Cloning of human full open reading frames in Gateway(TM) system entry vector (pDONR201).</title>
        <authorList>
            <person name="Ebert L."/>
            <person name="Schick M."/>
            <person name="Neubert P."/>
            <person name="Schatten R."/>
            <person name="Henze S."/>
            <person name="Korn B."/>
        </authorList>
    </citation>
    <scope>NUCLEOTIDE SEQUENCE [LARGE SCALE MRNA]</scope>
</reference>
<reference key="3">
    <citation type="journal article" date="2004" name="Nat. Genet.">
        <title>Complete sequencing and characterization of 21,243 full-length human cDNAs.</title>
        <authorList>
            <person name="Ota T."/>
            <person name="Suzuki Y."/>
            <person name="Nishikawa T."/>
            <person name="Otsuki T."/>
            <person name="Sugiyama T."/>
            <person name="Irie R."/>
            <person name="Wakamatsu A."/>
            <person name="Hayashi K."/>
            <person name="Sato H."/>
            <person name="Nagai K."/>
            <person name="Kimura K."/>
            <person name="Makita H."/>
            <person name="Sekine M."/>
            <person name="Obayashi M."/>
            <person name="Nishi T."/>
            <person name="Shibahara T."/>
            <person name="Tanaka T."/>
            <person name="Ishii S."/>
            <person name="Yamamoto J."/>
            <person name="Saito K."/>
            <person name="Kawai Y."/>
            <person name="Isono Y."/>
            <person name="Nakamura Y."/>
            <person name="Nagahari K."/>
            <person name="Murakami K."/>
            <person name="Yasuda T."/>
            <person name="Iwayanagi T."/>
            <person name="Wagatsuma M."/>
            <person name="Shiratori A."/>
            <person name="Sudo H."/>
            <person name="Hosoiri T."/>
            <person name="Kaku Y."/>
            <person name="Kodaira H."/>
            <person name="Kondo H."/>
            <person name="Sugawara M."/>
            <person name="Takahashi M."/>
            <person name="Kanda K."/>
            <person name="Yokoi T."/>
            <person name="Furuya T."/>
            <person name="Kikkawa E."/>
            <person name="Omura Y."/>
            <person name="Abe K."/>
            <person name="Kamihara K."/>
            <person name="Katsuta N."/>
            <person name="Sato K."/>
            <person name="Tanikawa M."/>
            <person name="Yamazaki M."/>
            <person name="Ninomiya K."/>
            <person name="Ishibashi T."/>
            <person name="Yamashita H."/>
            <person name="Murakawa K."/>
            <person name="Fujimori K."/>
            <person name="Tanai H."/>
            <person name="Kimata M."/>
            <person name="Watanabe M."/>
            <person name="Hiraoka S."/>
            <person name="Chiba Y."/>
            <person name="Ishida S."/>
            <person name="Ono Y."/>
            <person name="Takiguchi S."/>
            <person name="Watanabe S."/>
            <person name="Yosida M."/>
            <person name="Hotuta T."/>
            <person name="Kusano J."/>
            <person name="Kanehori K."/>
            <person name="Takahashi-Fujii A."/>
            <person name="Hara H."/>
            <person name="Tanase T.-O."/>
            <person name="Nomura Y."/>
            <person name="Togiya S."/>
            <person name="Komai F."/>
            <person name="Hara R."/>
            <person name="Takeuchi K."/>
            <person name="Arita M."/>
            <person name="Imose N."/>
            <person name="Musashino K."/>
            <person name="Yuuki H."/>
            <person name="Oshima A."/>
            <person name="Sasaki N."/>
            <person name="Aotsuka S."/>
            <person name="Yoshikawa Y."/>
            <person name="Matsunawa H."/>
            <person name="Ichihara T."/>
            <person name="Shiohata N."/>
            <person name="Sano S."/>
            <person name="Moriya S."/>
            <person name="Momiyama H."/>
            <person name="Satoh N."/>
            <person name="Takami S."/>
            <person name="Terashima Y."/>
            <person name="Suzuki O."/>
            <person name="Nakagawa S."/>
            <person name="Senoh A."/>
            <person name="Mizoguchi H."/>
            <person name="Goto Y."/>
            <person name="Shimizu F."/>
            <person name="Wakebe H."/>
            <person name="Hishigaki H."/>
            <person name="Watanabe T."/>
            <person name="Sugiyama A."/>
            <person name="Takemoto M."/>
            <person name="Kawakami B."/>
            <person name="Yamazaki M."/>
            <person name="Watanabe K."/>
            <person name="Kumagai A."/>
            <person name="Itakura S."/>
            <person name="Fukuzumi Y."/>
            <person name="Fujimori Y."/>
            <person name="Komiyama M."/>
            <person name="Tashiro H."/>
            <person name="Tanigami A."/>
            <person name="Fujiwara T."/>
            <person name="Ono T."/>
            <person name="Yamada K."/>
            <person name="Fujii Y."/>
            <person name="Ozaki K."/>
            <person name="Hirao M."/>
            <person name="Ohmori Y."/>
            <person name="Kawabata A."/>
            <person name="Hikiji T."/>
            <person name="Kobatake N."/>
            <person name="Inagaki H."/>
            <person name="Ikema Y."/>
            <person name="Okamoto S."/>
            <person name="Okitani R."/>
            <person name="Kawakami T."/>
            <person name="Noguchi S."/>
            <person name="Itoh T."/>
            <person name="Shigeta K."/>
            <person name="Senba T."/>
            <person name="Matsumura K."/>
            <person name="Nakajima Y."/>
            <person name="Mizuno T."/>
            <person name="Morinaga M."/>
            <person name="Sasaki M."/>
            <person name="Togashi T."/>
            <person name="Oyama M."/>
            <person name="Hata H."/>
            <person name="Watanabe M."/>
            <person name="Komatsu T."/>
            <person name="Mizushima-Sugano J."/>
            <person name="Satoh T."/>
            <person name="Shirai Y."/>
            <person name="Takahashi Y."/>
            <person name="Nakagawa K."/>
            <person name="Okumura K."/>
            <person name="Nagase T."/>
            <person name="Nomura N."/>
            <person name="Kikuchi H."/>
            <person name="Masuho Y."/>
            <person name="Yamashita R."/>
            <person name="Nakai K."/>
            <person name="Yada T."/>
            <person name="Nakamura Y."/>
            <person name="Ohara O."/>
            <person name="Isogai T."/>
            <person name="Sugano S."/>
        </authorList>
    </citation>
    <scope>NUCLEOTIDE SEQUENCE [LARGE SCALE MRNA]</scope>
    <source>
        <tissue>Brain</tissue>
    </source>
</reference>
<reference key="4">
    <citation type="submission" date="2005-09" db="EMBL/GenBank/DDBJ databases">
        <authorList>
            <person name="Mural R.J."/>
            <person name="Istrail S."/>
            <person name="Sutton G.G."/>
            <person name="Florea L."/>
            <person name="Halpern A.L."/>
            <person name="Mobarry C.M."/>
            <person name="Lippert R."/>
            <person name="Walenz B."/>
            <person name="Shatkay H."/>
            <person name="Dew I."/>
            <person name="Miller J.R."/>
            <person name="Flanigan M.J."/>
            <person name="Edwards N.J."/>
            <person name="Bolanos R."/>
            <person name="Fasulo D."/>
            <person name="Halldorsson B.V."/>
            <person name="Hannenhalli S."/>
            <person name="Turner R."/>
            <person name="Yooseph S."/>
            <person name="Lu F."/>
            <person name="Nusskern D.R."/>
            <person name="Shue B.C."/>
            <person name="Zheng X.H."/>
            <person name="Zhong F."/>
            <person name="Delcher A.L."/>
            <person name="Huson D.H."/>
            <person name="Kravitz S.A."/>
            <person name="Mouchard L."/>
            <person name="Reinert K."/>
            <person name="Remington K.A."/>
            <person name="Clark A.G."/>
            <person name="Waterman M.S."/>
            <person name="Eichler E.E."/>
            <person name="Adams M.D."/>
            <person name="Hunkapiller M.W."/>
            <person name="Myers E.W."/>
            <person name="Venter J.C."/>
        </authorList>
    </citation>
    <scope>NUCLEOTIDE SEQUENCE [LARGE SCALE GENOMIC DNA]</scope>
</reference>
<reference key="5">
    <citation type="journal article" date="2004" name="Genome Res.">
        <title>The status, quality, and expansion of the NIH full-length cDNA project: the Mammalian Gene Collection (MGC).</title>
        <authorList>
            <consortium name="The MGC Project Team"/>
        </authorList>
    </citation>
    <scope>NUCLEOTIDE SEQUENCE [LARGE SCALE MRNA]</scope>
    <source>
        <tissue>Brain</tissue>
        <tissue>Skin</tissue>
    </source>
</reference>
<reference key="6">
    <citation type="journal article" date="2005" name="Nat. Biotechnol.">
        <title>Immunoaffinity profiling of tyrosine phosphorylation in cancer cells.</title>
        <authorList>
            <person name="Rush J."/>
            <person name="Moritz A."/>
            <person name="Lee K.A."/>
            <person name="Guo A."/>
            <person name="Goss V.L."/>
            <person name="Spek E.J."/>
            <person name="Zhang H."/>
            <person name="Zha X.-M."/>
            <person name="Polakiewicz R.D."/>
            <person name="Comb M.J."/>
        </authorList>
    </citation>
    <scope>IDENTIFICATION BY MASS SPECTROMETRY [LARGE SCALE ANALYSIS]</scope>
</reference>
<reference key="7">
    <citation type="journal article" date="2006" name="Cell">
        <title>Global, in vivo, and site-specific phosphorylation dynamics in signaling networks.</title>
        <authorList>
            <person name="Olsen J.V."/>
            <person name="Blagoev B."/>
            <person name="Gnad F."/>
            <person name="Macek B."/>
            <person name="Kumar C."/>
            <person name="Mortensen P."/>
            <person name="Mann M."/>
        </authorList>
    </citation>
    <scope>PHOSPHORYLATION [LARGE SCALE ANALYSIS] AT SER-147</scope>
    <scope>IDENTIFICATION BY MASS SPECTROMETRY [LARGE SCALE ANALYSIS]</scope>
    <source>
        <tissue>Cervix carcinoma</tissue>
    </source>
</reference>
<reference key="8">
    <citation type="journal article" date="2006" name="Nat. Biotechnol.">
        <title>A probability-based approach for high-throughput protein phosphorylation analysis and site localization.</title>
        <authorList>
            <person name="Beausoleil S.A."/>
            <person name="Villen J."/>
            <person name="Gerber S.A."/>
            <person name="Rush J."/>
            <person name="Gygi S.P."/>
        </authorList>
    </citation>
    <scope>IDENTIFICATION BY MASS SPECTROMETRY [LARGE SCALE ANALYSIS]</scope>
    <source>
        <tissue>Cervix carcinoma</tissue>
    </source>
</reference>
<reference key="9">
    <citation type="journal article" date="2007" name="Mol. Cell. Proteomics">
        <title>Quantitative phosphoproteome profiling of Wnt3a-mediated signaling network: indicating the involvement of ribonucleoside-diphosphate reductase M2 subunit phosphorylation at residue serine 20 in canonical Wnt signal transduction.</title>
        <authorList>
            <person name="Tang L.-Y."/>
            <person name="Deng N."/>
            <person name="Wang L.-S."/>
            <person name="Dai J."/>
            <person name="Wang Z.-L."/>
            <person name="Jiang X.-S."/>
            <person name="Li S.-J."/>
            <person name="Li L."/>
            <person name="Sheng Q.-H."/>
            <person name="Wu D.-Q."/>
            <person name="Li L."/>
            <person name="Zeng R."/>
        </authorList>
    </citation>
    <scope>PHOSPHORYLATION [LARGE SCALE ANALYSIS] AT SER-17</scope>
    <scope>IDENTIFICATION BY MASS SPECTROMETRY [LARGE SCALE ANALYSIS]</scope>
    <source>
        <tissue>Embryonic kidney</tissue>
    </source>
</reference>
<reference key="10">
    <citation type="journal article" date="2008" name="J. Proteome Res.">
        <title>Combining protein-based IMAC, peptide-based IMAC, and MudPIT for efficient phosphoproteomic analysis.</title>
        <authorList>
            <person name="Cantin G.T."/>
            <person name="Yi W."/>
            <person name="Lu B."/>
            <person name="Park S.K."/>
            <person name="Xu T."/>
            <person name="Lee J.-D."/>
            <person name="Yates J.R. III"/>
        </authorList>
    </citation>
    <scope>IDENTIFICATION BY MASS SPECTROMETRY [LARGE SCALE ANALYSIS]</scope>
    <source>
        <tissue>Cervix carcinoma</tissue>
    </source>
</reference>
<reference key="11">
    <citation type="journal article" date="2008" name="J. Proteome Res.">
        <title>Phosphorylation analysis of primary human T lymphocytes using sequential IMAC and titanium oxide enrichment.</title>
        <authorList>
            <person name="Carrascal M."/>
            <person name="Ovelleiro D."/>
            <person name="Casas V."/>
            <person name="Gay M."/>
            <person name="Abian J."/>
        </authorList>
    </citation>
    <scope>IDENTIFICATION BY MASS SPECTROMETRY [LARGE SCALE ANALYSIS]</scope>
    <source>
        <tissue>T-cell</tissue>
    </source>
</reference>
<reference key="12">
    <citation type="journal article" date="2008" name="Mol. Cell">
        <title>Kinase-selective enrichment enables quantitative phosphoproteomics of the kinome across the cell cycle.</title>
        <authorList>
            <person name="Daub H."/>
            <person name="Olsen J.V."/>
            <person name="Bairlein M."/>
            <person name="Gnad F."/>
            <person name="Oppermann F.S."/>
            <person name="Korner R."/>
            <person name="Greff Z."/>
            <person name="Keri G."/>
            <person name="Stemmann O."/>
            <person name="Mann M."/>
        </authorList>
    </citation>
    <scope>PHOSPHORYLATION [LARGE SCALE ANALYSIS] AT SER-147</scope>
    <scope>IDENTIFICATION BY MASS SPECTROMETRY [LARGE SCALE ANALYSIS]</scope>
    <source>
        <tissue>Cervix carcinoma</tissue>
    </source>
</reference>
<reference key="13">
    <citation type="journal article" date="2008" name="Proc. Natl. Acad. Sci. U.S.A.">
        <title>A quantitative atlas of mitotic phosphorylation.</title>
        <authorList>
            <person name="Dephoure N."/>
            <person name="Zhou C."/>
            <person name="Villen J."/>
            <person name="Beausoleil S.A."/>
            <person name="Bakalarski C.E."/>
            <person name="Elledge S.J."/>
            <person name="Gygi S.P."/>
        </authorList>
    </citation>
    <scope>PHOSPHORYLATION [LARGE SCALE ANALYSIS] AT SER-15 AND SER-17</scope>
    <scope>IDENTIFICATION BY MASS SPECTROMETRY [LARGE SCALE ANALYSIS]</scope>
    <source>
        <tissue>Cervix carcinoma</tissue>
    </source>
</reference>
<reference key="14">
    <citation type="journal article" date="2008" name="Proteomics">
        <title>Large-scale phosphoproteome analysis of human liver tissue by enrichment and fractionation of phosphopeptides with strong anion exchange chromatography.</title>
        <authorList>
            <person name="Han G."/>
            <person name="Ye M."/>
            <person name="Zhou H."/>
            <person name="Jiang X."/>
            <person name="Feng S."/>
            <person name="Jiang X."/>
            <person name="Tian R."/>
            <person name="Wan D."/>
            <person name="Zou H."/>
            <person name="Gu J."/>
        </authorList>
    </citation>
    <scope>IDENTIFICATION BY MASS SPECTROMETRY [LARGE SCALE ANALYSIS]</scope>
    <source>
        <tissue>Liver</tissue>
    </source>
</reference>
<reference key="15">
    <citation type="journal article" date="2009" name="Anal. Chem.">
        <title>Lys-N and trypsin cover complementary parts of the phosphoproteome in a refined SCX-based approach.</title>
        <authorList>
            <person name="Gauci S."/>
            <person name="Helbig A.O."/>
            <person name="Slijper M."/>
            <person name="Krijgsveld J."/>
            <person name="Heck A.J."/>
            <person name="Mohammed S."/>
        </authorList>
    </citation>
    <scope>IDENTIFICATION BY MASS SPECTROMETRY [LARGE SCALE ANALYSIS]</scope>
</reference>
<reference key="16">
    <citation type="journal article" date="2009" name="Mol. Cell. Proteomics">
        <title>Large-scale proteomics analysis of the human kinome.</title>
        <authorList>
            <person name="Oppermann F.S."/>
            <person name="Gnad F."/>
            <person name="Olsen J.V."/>
            <person name="Hornberger R."/>
            <person name="Greff Z."/>
            <person name="Keri G."/>
            <person name="Mann M."/>
            <person name="Daub H."/>
        </authorList>
    </citation>
    <scope>IDENTIFICATION BY MASS SPECTROMETRY [LARGE SCALE ANALYSIS]</scope>
</reference>
<reference key="17">
    <citation type="journal article" date="2009" name="Sci. Signal.">
        <title>Quantitative phosphoproteomic analysis of T cell receptor signaling reveals system-wide modulation of protein-protein interactions.</title>
        <authorList>
            <person name="Mayya V."/>
            <person name="Lundgren D.H."/>
            <person name="Hwang S.-I."/>
            <person name="Rezaul K."/>
            <person name="Wu L."/>
            <person name="Eng J.K."/>
            <person name="Rodionov V."/>
            <person name="Han D.K."/>
        </authorList>
    </citation>
    <scope>PHOSPHORYLATION [LARGE SCALE ANALYSIS] AT SER-15 AND SER-17</scope>
    <scope>IDENTIFICATION BY MASS SPECTROMETRY [LARGE SCALE ANALYSIS]</scope>
    <source>
        <tissue>Leukemic T-cell</tissue>
    </source>
</reference>
<reference key="18">
    <citation type="journal article" date="2009" name="Science">
        <title>Lysine acetylation targets protein complexes and co-regulates major cellular functions.</title>
        <authorList>
            <person name="Choudhary C."/>
            <person name="Kumar C."/>
            <person name="Gnad F."/>
            <person name="Nielsen M.L."/>
            <person name="Rehman M."/>
            <person name="Walther T.C."/>
            <person name="Olsen J.V."/>
            <person name="Mann M."/>
        </authorList>
    </citation>
    <scope>ACETYLATION [LARGE SCALE ANALYSIS] AT LYS-174 AND LYS-179</scope>
    <scope>IDENTIFICATION BY MASS SPECTROMETRY [LARGE SCALE ANALYSIS]</scope>
</reference>
<reference key="19">
    <citation type="journal article" date="2010" name="Sci. Signal.">
        <title>Quantitative phosphoproteomics reveals widespread full phosphorylation site occupancy during mitosis.</title>
        <authorList>
            <person name="Olsen J.V."/>
            <person name="Vermeulen M."/>
            <person name="Santamaria A."/>
            <person name="Kumar C."/>
            <person name="Miller M.L."/>
            <person name="Jensen L.J."/>
            <person name="Gnad F."/>
            <person name="Cox J."/>
            <person name="Jensen T.S."/>
            <person name="Nigg E.A."/>
            <person name="Brunak S."/>
            <person name="Mann M."/>
        </authorList>
    </citation>
    <scope>PHOSPHORYLATION [LARGE SCALE ANALYSIS] AT SER-15; SER-17 AND SER-127</scope>
    <scope>IDENTIFICATION BY MASS SPECTROMETRY [LARGE SCALE ANALYSIS]</scope>
    <source>
        <tissue>Cervix carcinoma</tissue>
    </source>
</reference>
<reference key="20">
    <citation type="journal article" date="2011" name="BMC Syst. Biol.">
        <title>Initial characterization of the human central proteome.</title>
        <authorList>
            <person name="Burkard T.R."/>
            <person name="Planyavsky M."/>
            <person name="Kaupe I."/>
            <person name="Breitwieser F.P."/>
            <person name="Buerckstuemmer T."/>
            <person name="Bennett K.L."/>
            <person name="Superti-Furga G."/>
            <person name="Colinge J."/>
        </authorList>
    </citation>
    <scope>IDENTIFICATION BY MASS SPECTROMETRY [LARGE SCALE ANALYSIS]</scope>
</reference>
<reference key="21">
    <citation type="journal article" date="2011" name="Sci. Signal.">
        <title>System-wide temporal characterization of the proteome and phosphoproteome of human embryonic stem cell differentiation.</title>
        <authorList>
            <person name="Rigbolt K.T."/>
            <person name="Prokhorova T.A."/>
            <person name="Akimov V."/>
            <person name="Henningsen J."/>
            <person name="Johansen P.T."/>
            <person name="Kratchmarova I."/>
            <person name="Kassem M."/>
            <person name="Mann M."/>
            <person name="Olsen J.V."/>
            <person name="Blagoev B."/>
        </authorList>
    </citation>
    <scope>PHOSPHORYLATION [LARGE SCALE ANALYSIS] AT SER-17; SER-127 AND SER-147</scope>
    <scope>IDENTIFICATION BY MASS SPECTROMETRY [LARGE SCALE ANALYSIS]</scope>
</reference>
<reference key="22">
    <citation type="journal article" date="2013" name="J. Proteome Res.">
        <title>Toward a comprehensive characterization of a human cancer cell phosphoproteome.</title>
        <authorList>
            <person name="Zhou H."/>
            <person name="Di Palma S."/>
            <person name="Preisinger C."/>
            <person name="Peng M."/>
            <person name="Polat A.N."/>
            <person name="Heck A.J."/>
            <person name="Mohammed S."/>
        </authorList>
    </citation>
    <scope>PHOSPHORYLATION [LARGE SCALE ANALYSIS] AT SER-17; SER-63 AND SER-87</scope>
    <scope>IDENTIFICATION BY MASS SPECTROMETRY [LARGE SCALE ANALYSIS]</scope>
    <source>
        <tissue>Cervix carcinoma</tissue>
        <tissue>Erythroleukemia</tissue>
    </source>
</reference>
<reference key="23">
    <citation type="journal article" date="2014" name="J. Proteomics">
        <title>An enzyme assisted RP-RPLC approach for in-depth analysis of human liver phosphoproteome.</title>
        <authorList>
            <person name="Bian Y."/>
            <person name="Song C."/>
            <person name="Cheng K."/>
            <person name="Dong M."/>
            <person name="Wang F."/>
            <person name="Huang J."/>
            <person name="Sun D."/>
            <person name="Wang L."/>
            <person name="Ye M."/>
            <person name="Zou H."/>
        </authorList>
    </citation>
    <scope>IDENTIFICATION BY MASS SPECTROMETRY [LARGE SCALE ANALYSIS]</scope>
    <source>
        <tissue>Liver</tissue>
    </source>
</reference>
<reference key="24">
    <citation type="journal article" date="2017" name="Nat. Struct. Mol. Biol.">
        <title>Site-specific mapping of the human SUMO proteome reveals co-modification with phosphorylation.</title>
        <authorList>
            <person name="Hendriks I.A."/>
            <person name="Lyon D."/>
            <person name="Young C."/>
            <person name="Jensen L.J."/>
            <person name="Vertegaal A.C."/>
            <person name="Nielsen M.L."/>
        </authorList>
    </citation>
    <scope>SUMOYLATION [LARGE SCALE ANALYSIS] AT LYS-13; LYS-62 AND LYS-75</scope>
    <scope>IDENTIFICATION BY MASS SPECTROMETRY [LARGE SCALE ANALYSIS]</scope>
</reference>